<organism>
    <name type="scientific">Lactobacillus delbrueckii subsp. bulgaricus (strain ATCC 11842 / DSM 20081 / BCRC 10696 / JCM 1002 / NBRC 13953 / NCIMB 11778 / NCTC 12712 / WDCM 00102 / Lb 14)</name>
    <dbReference type="NCBI Taxonomy" id="390333"/>
    <lineage>
        <taxon>Bacteria</taxon>
        <taxon>Bacillati</taxon>
        <taxon>Bacillota</taxon>
        <taxon>Bacilli</taxon>
        <taxon>Lactobacillales</taxon>
        <taxon>Lactobacillaceae</taxon>
        <taxon>Lactobacillus</taxon>
    </lineage>
</organism>
<accession>Q1G9U8</accession>
<evidence type="ECO:0000255" key="1">
    <source>
        <dbReference type="HAMAP-Rule" id="MF_00052"/>
    </source>
</evidence>
<evidence type="ECO:0000255" key="2">
    <source>
        <dbReference type="PROSITE-ProRule" id="PRU01319"/>
    </source>
</evidence>
<reference key="1">
    <citation type="journal article" date="2006" name="Proc. Natl. Acad. Sci. U.S.A.">
        <title>The complete genome sequence of Lactobacillus bulgaricus reveals extensive and ongoing reductive evolution.</title>
        <authorList>
            <person name="van de Guchte M."/>
            <person name="Penaud S."/>
            <person name="Grimaldi C."/>
            <person name="Barbe V."/>
            <person name="Bryson K."/>
            <person name="Nicolas P."/>
            <person name="Robert C."/>
            <person name="Oztas S."/>
            <person name="Mangenot S."/>
            <person name="Couloux A."/>
            <person name="Loux V."/>
            <person name="Dervyn R."/>
            <person name="Bossy R."/>
            <person name="Bolotin A."/>
            <person name="Batto J.-M."/>
            <person name="Walunas T."/>
            <person name="Gibrat J.-F."/>
            <person name="Bessieres P."/>
            <person name="Weissenbach J."/>
            <person name="Ehrlich S.D."/>
            <person name="Maguin E."/>
        </authorList>
    </citation>
    <scope>NUCLEOTIDE SEQUENCE [LARGE SCALE GENOMIC DNA]</scope>
    <source>
        <strain>ATCC 11842 / DSM 20081 / BCRC 10696 / JCM 1002 / NBRC 13953 / NCIMB 11778 / NCTC 12712 / WDCM 00102 / Lb 14</strain>
    </source>
</reference>
<name>RNH2_LACDA</name>
<proteinExistence type="inferred from homology"/>
<dbReference type="EC" id="3.1.26.4" evidence="1"/>
<dbReference type="EMBL" id="CR954253">
    <property type="protein sequence ID" value="CAI98076.1"/>
    <property type="molecule type" value="Genomic_DNA"/>
</dbReference>
<dbReference type="RefSeq" id="WP_003618690.1">
    <property type="nucleotide sequence ID" value="NZ_JQAV01000005.1"/>
</dbReference>
<dbReference type="SMR" id="Q1G9U8"/>
<dbReference type="STRING" id="390333.Ldb1275"/>
<dbReference type="KEGG" id="ldb:Ldb1275"/>
<dbReference type="PATRIC" id="fig|390333.13.peg.1632"/>
<dbReference type="eggNOG" id="COG0164">
    <property type="taxonomic scope" value="Bacteria"/>
</dbReference>
<dbReference type="HOGENOM" id="CLU_036532_2_1_9"/>
<dbReference type="BioCyc" id="LDEL390333:LDB_RS05440-MONOMER"/>
<dbReference type="Proteomes" id="UP000001259">
    <property type="component" value="Chromosome"/>
</dbReference>
<dbReference type="GO" id="GO:0005737">
    <property type="term" value="C:cytoplasm"/>
    <property type="evidence" value="ECO:0007669"/>
    <property type="project" value="UniProtKB-SubCell"/>
</dbReference>
<dbReference type="GO" id="GO:0032299">
    <property type="term" value="C:ribonuclease H2 complex"/>
    <property type="evidence" value="ECO:0007669"/>
    <property type="project" value="TreeGrafter"/>
</dbReference>
<dbReference type="GO" id="GO:0030145">
    <property type="term" value="F:manganese ion binding"/>
    <property type="evidence" value="ECO:0007669"/>
    <property type="project" value="UniProtKB-UniRule"/>
</dbReference>
<dbReference type="GO" id="GO:0003723">
    <property type="term" value="F:RNA binding"/>
    <property type="evidence" value="ECO:0007669"/>
    <property type="project" value="InterPro"/>
</dbReference>
<dbReference type="GO" id="GO:0004523">
    <property type="term" value="F:RNA-DNA hybrid ribonuclease activity"/>
    <property type="evidence" value="ECO:0007669"/>
    <property type="project" value="UniProtKB-UniRule"/>
</dbReference>
<dbReference type="GO" id="GO:0043137">
    <property type="term" value="P:DNA replication, removal of RNA primer"/>
    <property type="evidence" value="ECO:0007669"/>
    <property type="project" value="TreeGrafter"/>
</dbReference>
<dbReference type="GO" id="GO:0006298">
    <property type="term" value="P:mismatch repair"/>
    <property type="evidence" value="ECO:0007669"/>
    <property type="project" value="TreeGrafter"/>
</dbReference>
<dbReference type="CDD" id="cd07182">
    <property type="entry name" value="RNase_HII_bacteria_HII_like"/>
    <property type="match status" value="1"/>
</dbReference>
<dbReference type="FunFam" id="3.30.420.10:FF:000006">
    <property type="entry name" value="Ribonuclease HII"/>
    <property type="match status" value="1"/>
</dbReference>
<dbReference type="Gene3D" id="3.30.420.10">
    <property type="entry name" value="Ribonuclease H-like superfamily/Ribonuclease H"/>
    <property type="match status" value="1"/>
</dbReference>
<dbReference type="HAMAP" id="MF_00052_B">
    <property type="entry name" value="RNase_HII_B"/>
    <property type="match status" value="1"/>
</dbReference>
<dbReference type="InterPro" id="IPR022898">
    <property type="entry name" value="RNase_HII"/>
</dbReference>
<dbReference type="InterPro" id="IPR001352">
    <property type="entry name" value="RNase_HII/HIII"/>
</dbReference>
<dbReference type="InterPro" id="IPR024567">
    <property type="entry name" value="RNase_HII/HIII_dom"/>
</dbReference>
<dbReference type="InterPro" id="IPR012337">
    <property type="entry name" value="RNaseH-like_sf"/>
</dbReference>
<dbReference type="InterPro" id="IPR036397">
    <property type="entry name" value="RNaseH_sf"/>
</dbReference>
<dbReference type="NCBIfam" id="NF000594">
    <property type="entry name" value="PRK00015.1-1"/>
    <property type="match status" value="1"/>
</dbReference>
<dbReference type="NCBIfam" id="NF000595">
    <property type="entry name" value="PRK00015.1-3"/>
    <property type="match status" value="1"/>
</dbReference>
<dbReference type="PANTHER" id="PTHR10954">
    <property type="entry name" value="RIBONUCLEASE H2 SUBUNIT A"/>
    <property type="match status" value="1"/>
</dbReference>
<dbReference type="PANTHER" id="PTHR10954:SF18">
    <property type="entry name" value="RIBONUCLEASE HII"/>
    <property type="match status" value="1"/>
</dbReference>
<dbReference type="Pfam" id="PF01351">
    <property type="entry name" value="RNase_HII"/>
    <property type="match status" value="1"/>
</dbReference>
<dbReference type="SUPFAM" id="SSF53098">
    <property type="entry name" value="Ribonuclease H-like"/>
    <property type="match status" value="1"/>
</dbReference>
<dbReference type="PROSITE" id="PS51975">
    <property type="entry name" value="RNASE_H_2"/>
    <property type="match status" value="1"/>
</dbReference>
<gene>
    <name evidence="1" type="primary">rnhB</name>
    <name type="ordered locus">Ldb1275</name>
</gene>
<protein>
    <recommendedName>
        <fullName evidence="1">Ribonuclease HII</fullName>
        <shortName evidence="1">RNase HII</shortName>
        <ecNumber evidence="1">3.1.26.4</ecNumber>
    </recommendedName>
</protein>
<sequence length="256" mass="28279">MKINEIKDLLQADSIDPAILAELAKDDRKGVQKLLVSYQRRQEKLAKQKEEFLGRFSYEKDFWAKGQLVGGVDEVGRGPLAGPVVAAAVILPEDFSLLEVNDSKKLSPQKRLALYPKILQEAVAVGVGVMDNKVIDQINIYEADRLAMKQAVEALSTRPDALLVDAMNVPVDLPQLELIKGDAKSNSIAAASIVAKVFRDSLMDDYARLYPDYAFDHNAGYGTKDHLEALRKYGPTPIHRLTFSPVSEMVGLKKAD</sequence>
<feature type="chain" id="PRO_1000031154" description="Ribonuclease HII">
    <location>
        <begin position="1"/>
        <end position="256"/>
    </location>
</feature>
<feature type="domain" description="RNase H type-2" evidence="2">
    <location>
        <begin position="67"/>
        <end position="255"/>
    </location>
</feature>
<feature type="binding site" evidence="1">
    <location>
        <position position="73"/>
    </location>
    <ligand>
        <name>a divalent metal cation</name>
        <dbReference type="ChEBI" id="CHEBI:60240"/>
    </ligand>
</feature>
<feature type="binding site" evidence="1">
    <location>
        <position position="74"/>
    </location>
    <ligand>
        <name>a divalent metal cation</name>
        <dbReference type="ChEBI" id="CHEBI:60240"/>
    </ligand>
</feature>
<feature type="binding site" evidence="1">
    <location>
        <position position="165"/>
    </location>
    <ligand>
        <name>a divalent metal cation</name>
        <dbReference type="ChEBI" id="CHEBI:60240"/>
    </ligand>
</feature>
<keyword id="KW-0963">Cytoplasm</keyword>
<keyword id="KW-0255">Endonuclease</keyword>
<keyword id="KW-0378">Hydrolase</keyword>
<keyword id="KW-0464">Manganese</keyword>
<keyword id="KW-0479">Metal-binding</keyword>
<keyword id="KW-0540">Nuclease</keyword>
<keyword id="KW-1185">Reference proteome</keyword>
<comment type="function">
    <text evidence="1">Endonuclease that specifically degrades the RNA of RNA-DNA hybrids.</text>
</comment>
<comment type="catalytic activity">
    <reaction evidence="1">
        <text>Endonucleolytic cleavage to 5'-phosphomonoester.</text>
        <dbReference type="EC" id="3.1.26.4"/>
    </reaction>
</comment>
<comment type="cofactor">
    <cofactor evidence="1">
        <name>Mn(2+)</name>
        <dbReference type="ChEBI" id="CHEBI:29035"/>
    </cofactor>
    <cofactor evidence="1">
        <name>Mg(2+)</name>
        <dbReference type="ChEBI" id="CHEBI:18420"/>
    </cofactor>
    <text evidence="1">Manganese or magnesium. Binds 1 divalent metal ion per monomer in the absence of substrate. May bind a second metal ion after substrate binding.</text>
</comment>
<comment type="subcellular location">
    <subcellularLocation>
        <location evidence="1">Cytoplasm</location>
    </subcellularLocation>
</comment>
<comment type="similarity">
    <text evidence="1">Belongs to the RNase HII family.</text>
</comment>